<reference key="1">
    <citation type="submission" date="2006-09" db="EMBL/GenBank/DDBJ databases">
        <title>Cloning and analysis of the Porphyra yezoensis gene for rps17.</title>
        <authorList>
            <person name="Wang M.Q."/>
            <person name="Mao Y.X."/>
        </authorList>
    </citation>
    <scope>NUCLEOTIDE SEQUENCE [GENOMIC DNA]</scope>
    <source>
        <strain>Qingdao</strain>
    </source>
</reference>
<reference key="2">
    <citation type="submission" date="2003-11" db="EMBL/GenBank/DDBJ databases">
        <title>Whole genome sequence of Porphyra yezoensis chloroplast.</title>
        <authorList>
            <person name="Kunimoto M."/>
            <person name="Morishima K."/>
            <person name="Yoshikawa M."/>
            <person name="Fukuda S."/>
            <person name="Kobayashi T."/>
            <person name="Kobayashi M."/>
            <person name="Okazaki T."/>
            <person name="Ohara I."/>
            <person name="Nakayama I."/>
        </authorList>
    </citation>
    <scope>NUCLEOTIDE SEQUENCE [LARGE SCALE GENOMIC DNA]</scope>
    <source>
        <strain>U-51</strain>
    </source>
</reference>
<feature type="chain" id="PRO_0000255712" description="Small ribosomal subunit protein uS17c">
    <location>
        <begin position="1"/>
        <end position="83"/>
    </location>
</feature>
<accession>Q1XDI3</accession>
<accession>A0MMA3</accession>
<keyword id="KW-0150">Chloroplast</keyword>
<keyword id="KW-0934">Plastid</keyword>
<keyword id="KW-0687">Ribonucleoprotein</keyword>
<keyword id="KW-0689">Ribosomal protein</keyword>
<keyword id="KW-0694">RNA-binding</keyword>
<keyword id="KW-0699">rRNA-binding</keyword>
<geneLocation type="chloroplast"/>
<gene>
    <name type="primary">rps17</name>
</gene>
<dbReference type="EMBL" id="DQ995196">
    <property type="protein sequence ID" value="ABJ91311.1"/>
    <property type="molecule type" value="Genomic_DNA"/>
</dbReference>
<dbReference type="EMBL" id="AP006715">
    <property type="protein sequence ID" value="BAE92428.1"/>
    <property type="molecule type" value="Genomic_DNA"/>
</dbReference>
<dbReference type="RefSeq" id="YP_536985.1">
    <property type="nucleotide sequence ID" value="NC_007932.1"/>
</dbReference>
<dbReference type="SMR" id="Q1XDI3"/>
<dbReference type="GeneID" id="3978913"/>
<dbReference type="GO" id="GO:0009507">
    <property type="term" value="C:chloroplast"/>
    <property type="evidence" value="ECO:0007669"/>
    <property type="project" value="UniProtKB-SubCell"/>
</dbReference>
<dbReference type="GO" id="GO:0022627">
    <property type="term" value="C:cytosolic small ribosomal subunit"/>
    <property type="evidence" value="ECO:0007669"/>
    <property type="project" value="TreeGrafter"/>
</dbReference>
<dbReference type="GO" id="GO:0019843">
    <property type="term" value="F:rRNA binding"/>
    <property type="evidence" value="ECO:0007669"/>
    <property type="project" value="UniProtKB-UniRule"/>
</dbReference>
<dbReference type="GO" id="GO:0003735">
    <property type="term" value="F:structural constituent of ribosome"/>
    <property type="evidence" value="ECO:0007669"/>
    <property type="project" value="InterPro"/>
</dbReference>
<dbReference type="GO" id="GO:0006412">
    <property type="term" value="P:translation"/>
    <property type="evidence" value="ECO:0007669"/>
    <property type="project" value="UniProtKB-UniRule"/>
</dbReference>
<dbReference type="CDD" id="cd00364">
    <property type="entry name" value="Ribosomal_uS17"/>
    <property type="match status" value="1"/>
</dbReference>
<dbReference type="Gene3D" id="2.40.50.140">
    <property type="entry name" value="Nucleic acid-binding proteins"/>
    <property type="match status" value="1"/>
</dbReference>
<dbReference type="HAMAP" id="MF_01345_B">
    <property type="entry name" value="Ribosomal_uS17_B"/>
    <property type="match status" value="1"/>
</dbReference>
<dbReference type="InterPro" id="IPR012340">
    <property type="entry name" value="NA-bd_OB-fold"/>
</dbReference>
<dbReference type="InterPro" id="IPR000266">
    <property type="entry name" value="Ribosomal_uS17"/>
</dbReference>
<dbReference type="InterPro" id="IPR019984">
    <property type="entry name" value="Ribosomal_uS17_bact/chlr"/>
</dbReference>
<dbReference type="InterPro" id="IPR019979">
    <property type="entry name" value="Ribosomal_uS17_CS"/>
</dbReference>
<dbReference type="NCBIfam" id="NF004123">
    <property type="entry name" value="PRK05610.1"/>
    <property type="match status" value="1"/>
</dbReference>
<dbReference type="NCBIfam" id="TIGR03635">
    <property type="entry name" value="uS17_bact"/>
    <property type="match status" value="1"/>
</dbReference>
<dbReference type="PANTHER" id="PTHR10744">
    <property type="entry name" value="40S RIBOSOMAL PROTEIN S11 FAMILY MEMBER"/>
    <property type="match status" value="1"/>
</dbReference>
<dbReference type="PANTHER" id="PTHR10744:SF1">
    <property type="entry name" value="SMALL RIBOSOMAL SUBUNIT PROTEIN US17M"/>
    <property type="match status" value="1"/>
</dbReference>
<dbReference type="Pfam" id="PF00366">
    <property type="entry name" value="Ribosomal_S17"/>
    <property type="match status" value="1"/>
</dbReference>
<dbReference type="PRINTS" id="PR00973">
    <property type="entry name" value="RIBOSOMALS17"/>
</dbReference>
<dbReference type="SUPFAM" id="SSF50249">
    <property type="entry name" value="Nucleic acid-binding proteins"/>
    <property type="match status" value="1"/>
</dbReference>
<dbReference type="PROSITE" id="PS00056">
    <property type="entry name" value="RIBOSOMAL_S17"/>
    <property type="match status" value="1"/>
</dbReference>
<protein>
    <recommendedName>
        <fullName evidence="2">Small ribosomal subunit protein uS17c</fullName>
    </recommendedName>
    <alternativeName>
        <fullName>30S ribosomal protein S17, chloroplastic</fullName>
    </alternativeName>
</protein>
<sequence>MPLKETTGKVVSDKMNKTIVVAVENRISHRKYAKTMIRTKKYKAHDENNECTIGDIVTIQETRPLSRTKCWTMVNILSKSFDN</sequence>
<name>RR17_PYRYE</name>
<comment type="function">
    <text evidence="1">One of the primary rRNA binding proteins, it binds specifically to the 5'-end of 16S ribosomal RNA.</text>
</comment>
<comment type="subunit">
    <text evidence="1">Part of the 30S ribosomal subunit.</text>
</comment>
<comment type="subcellular location">
    <subcellularLocation>
        <location>Plastid</location>
        <location>Chloroplast</location>
    </subcellularLocation>
</comment>
<comment type="similarity">
    <text evidence="2">Belongs to the universal ribosomal protein uS17 family.</text>
</comment>
<organism>
    <name type="scientific">Pyropia yezoensis</name>
    <name type="common">Susabi-nori</name>
    <name type="synonym">Porphyra yezoensis</name>
    <dbReference type="NCBI Taxonomy" id="2788"/>
    <lineage>
        <taxon>Eukaryota</taxon>
        <taxon>Rhodophyta</taxon>
        <taxon>Bangiophyceae</taxon>
        <taxon>Bangiales</taxon>
        <taxon>Bangiaceae</taxon>
        <taxon>Pyropia</taxon>
    </lineage>
</organism>
<proteinExistence type="inferred from homology"/>
<evidence type="ECO:0000250" key="1"/>
<evidence type="ECO:0000305" key="2"/>